<reference key="1">
    <citation type="journal article" date="2009" name="Proc. Natl. Acad. Sci. U.S.A.">
        <title>The genomic basis of trophic strategy in marine bacteria.</title>
        <authorList>
            <person name="Lauro F.M."/>
            <person name="McDougald D."/>
            <person name="Thomas T."/>
            <person name="Williams T.J."/>
            <person name="Egan S."/>
            <person name="Rice S."/>
            <person name="DeMaere M.Z."/>
            <person name="Ting L."/>
            <person name="Ertan H."/>
            <person name="Johnson J."/>
            <person name="Ferriera S."/>
            <person name="Lapidus A."/>
            <person name="Anderson I."/>
            <person name="Kyrpides N."/>
            <person name="Munk A.C."/>
            <person name="Detter C."/>
            <person name="Han C.S."/>
            <person name="Brown M.V."/>
            <person name="Robb F.T."/>
            <person name="Kjelleberg S."/>
            <person name="Cavicchioli R."/>
        </authorList>
    </citation>
    <scope>NUCLEOTIDE SEQUENCE [LARGE SCALE GENOMIC DNA]</scope>
    <source>
        <strain>DSM 13593 / LMG 18877 / RB2256</strain>
    </source>
</reference>
<evidence type="ECO:0000255" key="1">
    <source>
        <dbReference type="HAMAP-Rule" id="MF_00362"/>
    </source>
</evidence>
<evidence type="ECO:0000305" key="2"/>
<organism>
    <name type="scientific">Sphingopyxis alaskensis (strain DSM 13593 / LMG 18877 / RB2256)</name>
    <name type="common">Sphingomonas alaskensis</name>
    <dbReference type="NCBI Taxonomy" id="317655"/>
    <lineage>
        <taxon>Bacteria</taxon>
        <taxon>Pseudomonadati</taxon>
        <taxon>Pseudomonadota</taxon>
        <taxon>Alphaproteobacteria</taxon>
        <taxon>Sphingomonadales</taxon>
        <taxon>Sphingomonadaceae</taxon>
        <taxon>Sphingopyxis</taxon>
    </lineage>
</organism>
<feature type="chain" id="PRO_1000005600" description="Large ribosomal subunit protein uL10">
    <location>
        <begin position="1"/>
        <end position="171"/>
    </location>
</feature>
<accession>Q1GSF8</accession>
<dbReference type="EMBL" id="CP000356">
    <property type="protein sequence ID" value="ABF53414.1"/>
    <property type="molecule type" value="Genomic_DNA"/>
</dbReference>
<dbReference type="RefSeq" id="WP_011541994.1">
    <property type="nucleotide sequence ID" value="NC_008048.1"/>
</dbReference>
<dbReference type="SMR" id="Q1GSF8"/>
<dbReference type="STRING" id="317655.Sala_1701"/>
<dbReference type="KEGG" id="sal:Sala_1701"/>
<dbReference type="eggNOG" id="COG0244">
    <property type="taxonomic scope" value="Bacteria"/>
</dbReference>
<dbReference type="HOGENOM" id="CLU_092227_0_0_5"/>
<dbReference type="OrthoDB" id="9791972at2"/>
<dbReference type="Proteomes" id="UP000006578">
    <property type="component" value="Chromosome"/>
</dbReference>
<dbReference type="GO" id="GO:0015934">
    <property type="term" value="C:large ribosomal subunit"/>
    <property type="evidence" value="ECO:0007669"/>
    <property type="project" value="InterPro"/>
</dbReference>
<dbReference type="GO" id="GO:0070180">
    <property type="term" value="F:large ribosomal subunit rRNA binding"/>
    <property type="evidence" value="ECO:0007669"/>
    <property type="project" value="UniProtKB-UniRule"/>
</dbReference>
<dbReference type="GO" id="GO:0003735">
    <property type="term" value="F:structural constituent of ribosome"/>
    <property type="evidence" value="ECO:0007669"/>
    <property type="project" value="InterPro"/>
</dbReference>
<dbReference type="GO" id="GO:0006412">
    <property type="term" value="P:translation"/>
    <property type="evidence" value="ECO:0007669"/>
    <property type="project" value="UniProtKB-UniRule"/>
</dbReference>
<dbReference type="CDD" id="cd05797">
    <property type="entry name" value="Ribosomal_L10"/>
    <property type="match status" value="1"/>
</dbReference>
<dbReference type="Gene3D" id="3.30.70.1730">
    <property type="match status" value="1"/>
</dbReference>
<dbReference type="Gene3D" id="6.10.250.290">
    <property type="match status" value="1"/>
</dbReference>
<dbReference type="HAMAP" id="MF_00362">
    <property type="entry name" value="Ribosomal_uL10"/>
    <property type="match status" value="1"/>
</dbReference>
<dbReference type="InterPro" id="IPR001790">
    <property type="entry name" value="Ribosomal_uL10"/>
</dbReference>
<dbReference type="InterPro" id="IPR043141">
    <property type="entry name" value="Ribosomal_uL10-like_sf"/>
</dbReference>
<dbReference type="InterPro" id="IPR022973">
    <property type="entry name" value="Ribosomal_uL10_bac"/>
</dbReference>
<dbReference type="InterPro" id="IPR047865">
    <property type="entry name" value="Ribosomal_uL10_bac_type"/>
</dbReference>
<dbReference type="InterPro" id="IPR002363">
    <property type="entry name" value="Ribosomal_uL10_CS_bac"/>
</dbReference>
<dbReference type="NCBIfam" id="NF000955">
    <property type="entry name" value="PRK00099.1-1"/>
    <property type="match status" value="1"/>
</dbReference>
<dbReference type="PANTHER" id="PTHR11560">
    <property type="entry name" value="39S RIBOSOMAL PROTEIN L10, MITOCHONDRIAL"/>
    <property type="match status" value="1"/>
</dbReference>
<dbReference type="Pfam" id="PF00466">
    <property type="entry name" value="Ribosomal_L10"/>
    <property type="match status" value="1"/>
</dbReference>
<dbReference type="SUPFAM" id="SSF160369">
    <property type="entry name" value="Ribosomal protein L10-like"/>
    <property type="match status" value="1"/>
</dbReference>
<dbReference type="PROSITE" id="PS01109">
    <property type="entry name" value="RIBOSOMAL_L10"/>
    <property type="match status" value="1"/>
</dbReference>
<keyword id="KW-1185">Reference proteome</keyword>
<keyword id="KW-0687">Ribonucleoprotein</keyword>
<keyword id="KW-0689">Ribosomal protein</keyword>
<keyword id="KW-0694">RNA-binding</keyword>
<keyword id="KW-0699">rRNA-binding</keyword>
<proteinExistence type="inferred from homology"/>
<comment type="function">
    <text evidence="1">Forms part of the ribosomal stalk, playing a central role in the interaction of the ribosome with GTP-bound translation factors.</text>
</comment>
<comment type="subunit">
    <text evidence="1">Part of the ribosomal stalk of the 50S ribosomal subunit. The N-terminus interacts with L11 and the large rRNA to form the base of the stalk. The C-terminus forms an elongated spine to which L12 dimers bind in a sequential fashion forming a multimeric L10(L12)X complex.</text>
</comment>
<comment type="similarity">
    <text evidence="1">Belongs to the universal ribosomal protein uL10 family.</text>
</comment>
<gene>
    <name evidence="1" type="primary">rplJ</name>
    <name type="ordered locus">Sala_1701</name>
</gene>
<sequence>MDRAEKAEAVSSLNATLSNAASVVIVRNLGLTVAQSTVLRQQMRDAGANFRVTKNRLAKIALDGTSYTGIGELLTGPTAIASSTDPVAAAKIAVEFAKTNDKLEIVGGGMGDVILDVEGVKALASLPSLDELRGKLVGLLQAPATKVAQIAAAPAGQLARVFGAYGAKEAA</sequence>
<protein>
    <recommendedName>
        <fullName evidence="1">Large ribosomal subunit protein uL10</fullName>
    </recommendedName>
    <alternativeName>
        <fullName evidence="2">50S ribosomal protein L10</fullName>
    </alternativeName>
</protein>
<name>RL10_SPHAL</name>